<evidence type="ECO:0000250" key="1">
    <source>
        <dbReference type="UniProtKB" id="P27828"/>
    </source>
</evidence>
<evidence type="ECO:0000269" key="2">
    <source>
    </source>
</evidence>
<evidence type="ECO:0000303" key="3">
    <source>
    </source>
</evidence>
<evidence type="ECO:0000305" key="4"/>
<evidence type="ECO:0000312" key="5">
    <source>
        <dbReference type="EMBL" id="CAM07513.1"/>
    </source>
</evidence>
<evidence type="ECO:0007829" key="6">
    <source>
        <dbReference type="PDB" id="6VLB"/>
    </source>
</evidence>
<evidence type="ECO:0007829" key="7">
    <source>
        <dbReference type="PDB" id="6VLC"/>
    </source>
</evidence>
<dbReference type="EC" id="5.1.3.14" evidence="2"/>
<dbReference type="EMBL" id="AL157959">
    <property type="protein sequence ID" value="CAM07513.1"/>
    <property type="molecule type" value="Genomic_DNA"/>
</dbReference>
<dbReference type="PDB" id="6VLB">
    <property type="method" value="X-ray"/>
    <property type="resolution" value="1.85 A"/>
    <property type="chains" value="A/B=1-372"/>
</dbReference>
<dbReference type="PDB" id="6VLC">
    <property type="method" value="X-ray"/>
    <property type="resolution" value="2.15 A"/>
    <property type="chains" value="A/B/C/D=1-372"/>
</dbReference>
<dbReference type="PDBsum" id="6VLB"/>
<dbReference type="PDBsum" id="6VLC"/>
<dbReference type="SMR" id="A0A0U1RGY0"/>
<dbReference type="EnsemblBacteria" id="CAM07513">
    <property type="protein sequence ID" value="CAM07513"/>
    <property type="gene ID" value="NMA0199"/>
</dbReference>
<dbReference type="KEGG" id="nma:NMA0199"/>
<dbReference type="HOGENOM" id="CLU_041674_1_0_4"/>
<dbReference type="BRENDA" id="5.1.3.14">
    <property type="organism ID" value="16120"/>
</dbReference>
<dbReference type="UniPathway" id="UPA00934"/>
<dbReference type="Proteomes" id="UP000000626">
    <property type="component" value="Chromosome"/>
</dbReference>
<dbReference type="GO" id="GO:0008761">
    <property type="term" value="F:UDP-N-acetylglucosamine 2-epimerase activity"/>
    <property type="evidence" value="ECO:0007669"/>
    <property type="project" value="UniProtKB-EC"/>
</dbReference>
<dbReference type="GO" id="GO:0045227">
    <property type="term" value="P:capsule polysaccharide biosynthetic process"/>
    <property type="evidence" value="ECO:0007669"/>
    <property type="project" value="UniProtKB-UniPathway"/>
</dbReference>
<dbReference type="CDD" id="cd03786">
    <property type="entry name" value="GTB_UDP-GlcNAc_2-Epimerase"/>
    <property type="match status" value="1"/>
</dbReference>
<dbReference type="FunFam" id="3.40.50.2000:FF:000043">
    <property type="entry name" value="UDP-N-acetylglucosamine 2-epimerase"/>
    <property type="match status" value="1"/>
</dbReference>
<dbReference type="Gene3D" id="3.40.50.2000">
    <property type="entry name" value="Glycogen Phosphorylase B"/>
    <property type="match status" value="2"/>
</dbReference>
<dbReference type="InterPro" id="IPR003331">
    <property type="entry name" value="UDP_GlcNAc_Epimerase_2_dom"/>
</dbReference>
<dbReference type="InterPro" id="IPR029767">
    <property type="entry name" value="WecB-like"/>
</dbReference>
<dbReference type="NCBIfam" id="TIGR00236">
    <property type="entry name" value="wecB"/>
    <property type="match status" value="1"/>
</dbReference>
<dbReference type="PANTHER" id="PTHR43174">
    <property type="entry name" value="UDP-N-ACETYLGLUCOSAMINE 2-EPIMERASE"/>
    <property type="match status" value="1"/>
</dbReference>
<dbReference type="PANTHER" id="PTHR43174:SF2">
    <property type="entry name" value="UDP-N-ACETYLGLUCOSAMINE 2-EPIMERASE"/>
    <property type="match status" value="1"/>
</dbReference>
<dbReference type="Pfam" id="PF02350">
    <property type="entry name" value="Epimerase_2"/>
    <property type="match status" value="1"/>
</dbReference>
<dbReference type="SUPFAM" id="SSF53756">
    <property type="entry name" value="UDP-Glycosyltransferase/glycogen phosphorylase"/>
    <property type="match status" value="1"/>
</dbReference>
<proteinExistence type="evidence at protein level"/>
<sequence>MKVLTVFGTRPEAIKMAPVILELQKHNTITSKVCITAQHREMLDQVLSLFEIKADYDLNIMKPNQSLQEITTNIISSLTDVLEDFKPDCVLVHGDTTTTFAASLAAFYQKIPVGHIEAGLRTYNLYSPWPEEANRRLTSVLSQWHFAPTEDSKNNLLSESIPSDKVIVTGNTVIDALMVSLEKLKITTIKKQMEQAFPFIQDNSKVILITAHRRENHGEGIKNIGLSILELAKKYPTFSFVIPLHLNPNVRKPIQDLLSSVHNVHLIEPQEYLPFVYLMSKSHIILSDSGGIQEEAPSLGKPVLVLRDTTERPEAVAAGTVKLVGSETQNIIESFTQLIEYPEYYEKMANIENPYGIGNASKIIVETLLKNR</sequence>
<comment type="function">
    <text evidence="2">Catalyzes the interconversion between UDP-N-acetylglucosamine (UDP-GlcNAc) and UDP-N-acetylmannosamine (UDP-ManNAc). Involved in the biosynthesis of the capsular polysaccharides. In vitro, can also use several chemoenzymatically synthesized UDP-ManNAc derivatives as substrates, with lower efficiency.</text>
</comment>
<comment type="catalytic activity">
    <reaction evidence="2">
        <text>UDP-N-acetyl-alpha-D-glucosamine = UDP-N-acetyl-alpha-D-mannosamine</text>
        <dbReference type="Rhea" id="RHEA:17213"/>
        <dbReference type="ChEBI" id="CHEBI:57705"/>
        <dbReference type="ChEBI" id="CHEBI:68623"/>
        <dbReference type="EC" id="5.1.3.14"/>
    </reaction>
</comment>
<comment type="activity regulation">
    <text evidence="2">Activated by UDP-GlcNAc and inhibited by 2-acetamidoglucal and UDP. Activity is strongly decreased in the presence of Co(2+) and abolished in the presence of Mn(2+) or Zn(2+).</text>
</comment>
<comment type="biophysicochemical properties">
    <kinetics>
        <KM evidence="2">3.6 mM for UDP-GlcNAc</KM>
        <KM evidence="2">5.2 mM for UDP-ManNAc</KM>
        <KM evidence="2">20 mM for UDP-ManNGc</KM>
        <KM evidence="2">51 mM for UDP-ManNPr</KM>
        <KM evidence="2">63 mM for rUDP-ManNAc</KM>
        <text evidence="2">kcat is 31 sec(-1) with UDP-GlcNAc as substrate. kcat is 52 sec(-1) with UDP-ManNAc as substrate. kcat is 4.2 sec(-1) with UDP-ManNGc as substrate. kcat is 7.8 sec(-1) with UDP-ManNPr as substrate. kcat is 6.7 sec(-1) with rUDP-ManNAc as substrate.</text>
    </kinetics>
    <phDependence>
        <text evidence="2">Optimum pH is 8-0-9.0.</text>
    </phDependence>
</comment>
<comment type="pathway">
    <text evidence="2">Capsule biogenesis; capsule polysaccharide biosynthesis.</text>
</comment>
<comment type="similarity">
    <text evidence="4">Belongs to the UDP-N-acetylglucosamine 2-epimerase family.</text>
</comment>
<protein>
    <recommendedName>
        <fullName evidence="4">UDP-N-acetylglucosamine 2-epimerase</fullName>
        <shortName evidence="3">UDP-GlcNAc 2-epimerase</shortName>
        <ecNumber evidence="2">5.1.3.14</ecNumber>
    </recommendedName>
</protein>
<feature type="chain" id="PRO_0000442460" description="UDP-N-acetylglucosamine 2-epimerase">
    <location>
        <begin position="1"/>
        <end position="372"/>
    </location>
</feature>
<feature type="binding site" evidence="1">
    <location>
        <position position="10"/>
    </location>
    <ligand>
        <name>substrate</name>
    </ligand>
</feature>
<feature type="binding site" evidence="1">
    <location>
        <position position="15"/>
    </location>
    <ligand>
        <name>substrate</name>
    </ligand>
</feature>
<feature type="binding site" evidence="1">
    <location>
        <position position="95"/>
    </location>
    <ligand>
        <name>substrate</name>
    </ligand>
</feature>
<feature type="binding site" evidence="1">
    <location>
        <position position="117"/>
    </location>
    <ligand>
        <name>substrate</name>
    </ligand>
</feature>
<feature type="binding site" evidence="1">
    <location>
        <position position="212"/>
    </location>
    <ligand>
        <name>substrate</name>
    </ligand>
</feature>
<feature type="binding site" evidence="1">
    <location>
        <position position="270"/>
    </location>
    <ligand>
        <name>substrate</name>
    </ligand>
</feature>
<feature type="binding site" evidence="1">
    <location>
        <position position="275"/>
    </location>
    <ligand>
        <name>substrate</name>
    </ligand>
</feature>
<feature type="binding site" evidence="1">
    <location>
        <begin position="289"/>
        <end position="291"/>
    </location>
    <ligand>
        <name>substrate</name>
    </ligand>
</feature>
<feature type="binding site" evidence="1">
    <location>
        <position position="295"/>
    </location>
    <ligand>
        <name>substrate</name>
    </ligand>
</feature>
<feature type="binding site" evidence="1">
    <location>
        <position position="312"/>
    </location>
    <ligand>
        <name>substrate</name>
    </ligand>
</feature>
<feature type="strand" evidence="6">
    <location>
        <begin position="2"/>
        <end position="7"/>
    </location>
</feature>
<feature type="helix" evidence="6">
    <location>
        <begin position="10"/>
        <end position="23"/>
    </location>
</feature>
<feature type="strand" evidence="6">
    <location>
        <begin position="30"/>
        <end position="35"/>
    </location>
</feature>
<feature type="helix" evidence="6">
    <location>
        <begin position="40"/>
        <end position="50"/>
    </location>
</feature>
<feature type="strand" evidence="6">
    <location>
        <begin position="55"/>
        <end position="57"/>
    </location>
</feature>
<feature type="helix" evidence="6">
    <location>
        <begin position="67"/>
        <end position="85"/>
    </location>
</feature>
<feature type="strand" evidence="6">
    <location>
        <begin position="88"/>
        <end position="93"/>
    </location>
</feature>
<feature type="helix" evidence="6">
    <location>
        <begin position="97"/>
        <end position="108"/>
    </location>
</feature>
<feature type="strand" evidence="6">
    <location>
        <begin position="113"/>
        <end position="117"/>
    </location>
</feature>
<feature type="turn" evidence="7">
    <location>
        <begin position="125"/>
        <end position="130"/>
    </location>
</feature>
<feature type="helix" evidence="6">
    <location>
        <begin position="131"/>
        <end position="141"/>
    </location>
</feature>
<feature type="strand" evidence="6">
    <location>
        <begin position="143"/>
        <end position="149"/>
    </location>
</feature>
<feature type="helix" evidence="6">
    <location>
        <begin position="150"/>
        <end position="157"/>
    </location>
</feature>
<feature type="turn" evidence="6">
    <location>
        <begin position="158"/>
        <end position="160"/>
    </location>
</feature>
<feature type="helix" evidence="6">
    <location>
        <begin position="163"/>
        <end position="165"/>
    </location>
</feature>
<feature type="strand" evidence="6">
    <location>
        <begin position="166"/>
        <end position="168"/>
    </location>
</feature>
<feature type="helix" evidence="6">
    <location>
        <begin position="172"/>
        <end position="183"/>
    </location>
</feature>
<feature type="helix" evidence="6">
    <location>
        <begin position="187"/>
        <end position="196"/>
    </location>
</feature>
<feature type="strand" evidence="6">
    <location>
        <begin position="205"/>
        <end position="210"/>
    </location>
</feature>
<feature type="helix" evidence="6">
    <location>
        <begin position="214"/>
        <end position="216"/>
    </location>
</feature>
<feature type="helix" evidence="6">
    <location>
        <begin position="219"/>
        <end position="234"/>
    </location>
</feature>
<feature type="strand" evidence="6">
    <location>
        <begin position="238"/>
        <end position="243"/>
    </location>
</feature>
<feature type="helix" evidence="6">
    <location>
        <begin position="248"/>
        <end position="258"/>
    </location>
</feature>
<feature type="strand" evidence="6">
    <location>
        <begin position="264"/>
        <end position="267"/>
    </location>
</feature>
<feature type="helix" evidence="6">
    <location>
        <begin position="272"/>
        <end position="281"/>
    </location>
</feature>
<feature type="strand" evidence="6">
    <location>
        <begin position="282"/>
        <end position="287"/>
    </location>
</feature>
<feature type="helix" evidence="6">
    <location>
        <begin position="292"/>
        <end position="295"/>
    </location>
</feature>
<feature type="helix" evidence="6">
    <location>
        <begin position="296"/>
        <end position="299"/>
    </location>
</feature>
<feature type="strand" evidence="6">
    <location>
        <begin position="303"/>
        <end position="308"/>
    </location>
</feature>
<feature type="helix" evidence="6">
    <location>
        <begin position="313"/>
        <end position="318"/>
    </location>
</feature>
<feature type="strand" evidence="6">
    <location>
        <begin position="320"/>
        <end position="323"/>
    </location>
</feature>
<feature type="helix" evidence="6">
    <location>
        <begin position="328"/>
        <end position="340"/>
    </location>
</feature>
<feature type="helix" evidence="6">
    <location>
        <begin position="342"/>
        <end position="349"/>
    </location>
</feature>
<feature type="helix" evidence="6">
    <location>
        <begin position="360"/>
        <end position="370"/>
    </location>
</feature>
<name>SACA_NEIMA</name>
<reference key="1">
    <citation type="journal article" date="2000" name="Nature">
        <title>Complete DNA sequence of a serogroup A strain of Neisseria meningitidis Z2491.</title>
        <authorList>
            <person name="Parkhill J."/>
            <person name="Achtman M."/>
            <person name="James K.D."/>
            <person name="Bentley S.D."/>
            <person name="Churcher C.M."/>
            <person name="Klee S.R."/>
            <person name="Morelli G."/>
            <person name="Basham D."/>
            <person name="Brown D."/>
            <person name="Chillingworth T."/>
            <person name="Davies R.M."/>
            <person name="Davis P."/>
            <person name="Devlin K."/>
            <person name="Feltwell T."/>
            <person name="Hamlin N."/>
            <person name="Holroyd S."/>
            <person name="Jagels K."/>
            <person name="Leather S."/>
            <person name="Moule S."/>
            <person name="Mungall K.L."/>
            <person name="Quail M.A."/>
            <person name="Rajandream M.A."/>
            <person name="Rutherford K.M."/>
            <person name="Simmonds M."/>
            <person name="Skelton J."/>
            <person name="Whitehead S."/>
            <person name="Spratt B.G."/>
            <person name="Barrell B.G."/>
        </authorList>
    </citation>
    <scope>NUCLEOTIDE SEQUENCE [LARGE SCALE GENOMIC DNA]</scope>
    <source>
        <strain>DSM 15465 / Z2491</strain>
    </source>
</reference>
<reference key="2">
    <citation type="journal article" date="2016" name="Carbohydr. Res.">
        <title>Characterizing non-hydrolyzing Neisseria meningitidis serogroup A UDP-N-acetylglucosamine (UDP-GlcNAc) 2-epimerase using UDP-N-acetylmannosamine (UDP-ManNAc) and derivatives.</title>
        <authorList>
            <person name="Zhang L."/>
            <person name="Muthana M.M."/>
            <person name="Yu H."/>
            <person name="McArthur J.B."/>
            <person name="Qu J."/>
            <person name="Chen X."/>
        </authorList>
    </citation>
    <scope>FUNCTION</scope>
    <scope>CATALYTIC ACTIVITY</scope>
    <scope>ACTIVITY REGULATION</scope>
    <scope>BIOPHYSICOCHEMICAL PROPERTIES</scope>
    <scope>PATHWAY</scope>
    <source>
        <strain>M1027 / Serogroup A</strain>
    </source>
</reference>
<accession>A0A0U1RGY0</accession>
<gene>
    <name evidence="3" type="primary">sacA</name>
    <name evidence="5" type="ordered locus">NMA0199</name>
</gene>
<keyword id="KW-0002">3D-structure</keyword>
<keyword id="KW-0972">Capsule biogenesis/degradation</keyword>
<keyword id="KW-0413">Isomerase</keyword>
<organism>
    <name type="scientific">Neisseria meningitidis serogroup A / serotype 4A (strain DSM 15465 / Z2491)</name>
    <dbReference type="NCBI Taxonomy" id="122587"/>
    <lineage>
        <taxon>Bacteria</taxon>
        <taxon>Pseudomonadati</taxon>
        <taxon>Pseudomonadota</taxon>
        <taxon>Betaproteobacteria</taxon>
        <taxon>Neisseriales</taxon>
        <taxon>Neisseriaceae</taxon>
        <taxon>Neisseria</taxon>
    </lineage>
</organism>